<name>GLMU_CAMC1</name>
<gene>
    <name evidence="1" type="primary">glmU</name>
    <name type="ordered locus">Ccon26_07090</name>
    <name type="ORF">CCC13826_0692</name>
</gene>
<comment type="function">
    <text evidence="1">Catalyzes the last two sequential reactions in the de novo biosynthetic pathway for UDP-N-acetylglucosamine (UDP-GlcNAc). The C-terminal domain catalyzes the transfer of acetyl group from acetyl coenzyme A to glucosamine-1-phosphate (GlcN-1-P) to produce N-acetylglucosamine-1-phosphate (GlcNAc-1-P), which is converted into UDP-GlcNAc by the transfer of uridine 5-monophosphate (from uridine 5-triphosphate), a reaction catalyzed by the N-terminal domain.</text>
</comment>
<comment type="catalytic activity">
    <reaction evidence="1">
        <text>alpha-D-glucosamine 1-phosphate + acetyl-CoA = N-acetyl-alpha-D-glucosamine 1-phosphate + CoA + H(+)</text>
        <dbReference type="Rhea" id="RHEA:13725"/>
        <dbReference type="ChEBI" id="CHEBI:15378"/>
        <dbReference type="ChEBI" id="CHEBI:57287"/>
        <dbReference type="ChEBI" id="CHEBI:57288"/>
        <dbReference type="ChEBI" id="CHEBI:57776"/>
        <dbReference type="ChEBI" id="CHEBI:58516"/>
        <dbReference type="EC" id="2.3.1.157"/>
    </reaction>
</comment>
<comment type="catalytic activity">
    <reaction evidence="1">
        <text>N-acetyl-alpha-D-glucosamine 1-phosphate + UTP + H(+) = UDP-N-acetyl-alpha-D-glucosamine + diphosphate</text>
        <dbReference type="Rhea" id="RHEA:13509"/>
        <dbReference type="ChEBI" id="CHEBI:15378"/>
        <dbReference type="ChEBI" id="CHEBI:33019"/>
        <dbReference type="ChEBI" id="CHEBI:46398"/>
        <dbReference type="ChEBI" id="CHEBI:57705"/>
        <dbReference type="ChEBI" id="CHEBI:57776"/>
        <dbReference type="EC" id="2.7.7.23"/>
    </reaction>
</comment>
<comment type="cofactor">
    <cofactor evidence="1">
        <name>Mg(2+)</name>
        <dbReference type="ChEBI" id="CHEBI:18420"/>
    </cofactor>
    <text evidence="1">Binds 1 Mg(2+) ion per subunit.</text>
</comment>
<comment type="pathway">
    <text evidence="1">Nucleotide-sugar biosynthesis; UDP-N-acetyl-alpha-D-glucosamine biosynthesis; N-acetyl-alpha-D-glucosamine 1-phosphate from alpha-D-glucosamine 6-phosphate (route II): step 2/2.</text>
</comment>
<comment type="pathway">
    <text evidence="1">Nucleotide-sugar biosynthesis; UDP-N-acetyl-alpha-D-glucosamine biosynthesis; UDP-N-acetyl-alpha-D-glucosamine from N-acetyl-alpha-D-glucosamine 1-phosphate: step 1/1.</text>
</comment>
<comment type="pathway">
    <text evidence="1">Bacterial outer membrane biogenesis; LPS lipid A biosynthesis.</text>
</comment>
<comment type="subunit">
    <text evidence="1">Homotrimer.</text>
</comment>
<comment type="subcellular location">
    <subcellularLocation>
        <location evidence="1">Cytoplasm</location>
    </subcellularLocation>
</comment>
<comment type="similarity">
    <text evidence="1">In the N-terminal section; belongs to the N-acetylglucosamine-1-phosphate uridyltransferase family.</text>
</comment>
<comment type="similarity">
    <text evidence="1">In the C-terminal section; belongs to the transferase hexapeptide repeat family.</text>
</comment>
<feature type="chain" id="PRO_0000337713" description="Bifunctional protein GlmU">
    <location>
        <begin position="1"/>
        <end position="436"/>
    </location>
</feature>
<feature type="region of interest" description="Pyrophosphorylase" evidence="1">
    <location>
        <begin position="1"/>
        <end position="225"/>
    </location>
</feature>
<feature type="region of interest" description="Linker" evidence="1">
    <location>
        <begin position="226"/>
        <end position="246"/>
    </location>
</feature>
<feature type="region of interest" description="N-acetyltransferase" evidence="1">
    <location>
        <begin position="247"/>
        <end position="436"/>
    </location>
</feature>
<feature type="active site" description="Proton acceptor" evidence="1">
    <location>
        <position position="338"/>
    </location>
</feature>
<feature type="binding site" evidence="1">
    <location>
        <begin position="10"/>
        <end position="13"/>
    </location>
    <ligand>
        <name>UDP-N-acetyl-alpha-D-glucosamine</name>
        <dbReference type="ChEBI" id="CHEBI:57705"/>
    </ligand>
</feature>
<feature type="binding site" evidence="1">
    <location>
        <position position="24"/>
    </location>
    <ligand>
        <name>UDP-N-acetyl-alpha-D-glucosamine</name>
        <dbReference type="ChEBI" id="CHEBI:57705"/>
    </ligand>
</feature>
<feature type="binding site" evidence="1">
    <location>
        <position position="76"/>
    </location>
    <ligand>
        <name>UDP-N-acetyl-alpha-D-glucosamine</name>
        <dbReference type="ChEBI" id="CHEBI:57705"/>
    </ligand>
</feature>
<feature type="binding site" evidence="1">
    <location>
        <begin position="83"/>
        <end position="84"/>
    </location>
    <ligand>
        <name>UDP-N-acetyl-alpha-D-glucosamine</name>
        <dbReference type="ChEBI" id="CHEBI:57705"/>
    </ligand>
</feature>
<feature type="binding site" evidence="1">
    <location>
        <position position="104"/>
    </location>
    <ligand>
        <name>Mg(2+)</name>
        <dbReference type="ChEBI" id="CHEBI:18420"/>
    </ligand>
</feature>
<feature type="binding site" evidence="1">
    <location>
        <position position="137"/>
    </location>
    <ligand>
        <name>UDP-N-acetyl-alpha-D-glucosamine</name>
        <dbReference type="ChEBI" id="CHEBI:57705"/>
    </ligand>
</feature>
<feature type="binding site" evidence="1">
    <location>
        <position position="151"/>
    </location>
    <ligand>
        <name>UDP-N-acetyl-alpha-D-glucosamine</name>
        <dbReference type="ChEBI" id="CHEBI:57705"/>
    </ligand>
</feature>
<feature type="binding site" evidence="1">
    <location>
        <position position="166"/>
    </location>
    <ligand>
        <name>UDP-N-acetyl-alpha-D-glucosamine</name>
        <dbReference type="ChEBI" id="CHEBI:57705"/>
    </ligand>
</feature>
<feature type="binding site" evidence="1">
    <location>
        <position position="223"/>
    </location>
    <ligand>
        <name>Mg(2+)</name>
        <dbReference type="ChEBI" id="CHEBI:18420"/>
    </ligand>
</feature>
<feature type="binding site" evidence="1">
    <location>
        <position position="223"/>
    </location>
    <ligand>
        <name>UDP-N-acetyl-alpha-D-glucosamine</name>
        <dbReference type="ChEBI" id="CHEBI:57705"/>
    </ligand>
</feature>
<feature type="binding site" evidence="1">
    <location>
        <position position="310"/>
    </location>
    <ligand>
        <name>UDP-N-acetyl-alpha-D-glucosamine</name>
        <dbReference type="ChEBI" id="CHEBI:57705"/>
    </ligand>
</feature>
<feature type="binding site" evidence="1">
    <location>
        <position position="327"/>
    </location>
    <ligand>
        <name>UDP-N-acetyl-alpha-D-glucosamine</name>
        <dbReference type="ChEBI" id="CHEBI:57705"/>
    </ligand>
</feature>
<feature type="binding site" evidence="1">
    <location>
        <position position="341"/>
    </location>
    <ligand>
        <name>UDP-N-acetyl-alpha-D-glucosamine</name>
        <dbReference type="ChEBI" id="CHEBI:57705"/>
    </ligand>
</feature>
<feature type="binding site" evidence="1">
    <location>
        <position position="352"/>
    </location>
    <ligand>
        <name>UDP-N-acetyl-alpha-D-glucosamine</name>
        <dbReference type="ChEBI" id="CHEBI:57705"/>
    </ligand>
</feature>
<feature type="binding site" evidence="1">
    <location>
        <begin position="361"/>
        <end position="362"/>
    </location>
    <ligand>
        <name>acetyl-CoA</name>
        <dbReference type="ChEBI" id="CHEBI:57288"/>
    </ligand>
</feature>
<feature type="binding site" evidence="1">
    <location>
        <position position="380"/>
    </location>
    <ligand>
        <name>acetyl-CoA</name>
        <dbReference type="ChEBI" id="CHEBI:57288"/>
    </ligand>
</feature>
<feature type="binding site" evidence="1">
    <location>
        <position position="398"/>
    </location>
    <ligand>
        <name>acetyl-CoA</name>
        <dbReference type="ChEBI" id="CHEBI:57288"/>
    </ligand>
</feature>
<feature type="binding site" evidence="1">
    <location>
        <position position="415"/>
    </location>
    <ligand>
        <name>acetyl-CoA</name>
        <dbReference type="ChEBI" id="CHEBI:57288"/>
    </ligand>
</feature>
<accession>A7ZCS8</accession>
<protein>
    <recommendedName>
        <fullName evidence="1">Bifunctional protein GlmU</fullName>
    </recommendedName>
    <domain>
        <recommendedName>
            <fullName evidence="1">UDP-N-acetylglucosamine pyrophosphorylase</fullName>
            <ecNumber evidence="1">2.7.7.23</ecNumber>
        </recommendedName>
        <alternativeName>
            <fullName evidence="1">N-acetylglucosamine-1-phosphate uridyltransferase</fullName>
        </alternativeName>
    </domain>
    <domain>
        <recommendedName>
            <fullName evidence="1">Glucosamine-1-phosphate N-acetyltransferase</fullName>
            <ecNumber evidence="1">2.3.1.157</ecNumber>
        </recommendedName>
    </domain>
</protein>
<reference key="1">
    <citation type="submission" date="2007-10" db="EMBL/GenBank/DDBJ databases">
        <title>Genome sequence of Campylobacter concisus 13826 isolated from human feces.</title>
        <authorList>
            <person name="Fouts D.E."/>
            <person name="Mongodin E.F."/>
            <person name="Puiu D."/>
            <person name="Sebastian Y."/>
            <person name="Miller W.G."/>
            <person name="Mandrell R.E."/>
            <person name="On S."/>
            <person name="Nelson K.E."/>
        </authorList>
    </citation>
    <scope>NUCLEOTIDE SEQUENCE [LARGE SCALE GENOMIC DNA]</scope>
    <source>
        <strain>13826</strain>
    </source>
</reference>
<sequence length="436" mass="47529">MNNNTSIIILAAGLGTRMKSKRPKVLFELCGEPMIIHILKQAYAITNDVSVVLHYEKELISKKIKEIFPQTKIFEQDLANFPGTAGAIKGVNLSGEKVLVTCGDMPLVRSTDLMRLANAEADVVMSSFEAANPFGYGRVIIKNGKVEAIVEQKDASEAQLAIKSVNAGCYCFKREALEQILPLINNQNAQKEYYLTDAIKIANEKGLKCVAVNVNEQNFMGINDKFQLSIAEKIMQDEIKQNLMKAGVLMRMPESIFIDSRAKFEGECVLEENVSILGECVITESIIKSSSVIESSVIKNSDIGPLAHIRPNSEISDTHIGNFVEVKKGVLNGVKAGHLSYLGDCEIESGTNIGCGTITCNYDGKAKYKTKIGKNVFVGSDTQLVAPVNIADNVIIAAGSTITKDVESGALAISRGRQENKSGFFEKFFGKDDVKK</sequence>
<organism>
    <name type="scientific">Campylobacter concisus (strain 13826)</name>
    <dbReference type="NCBI Taxonomy" id="360104"/>
    <lineage>
        <taxon>Bacteria</taxon>
        <taxon>Pseudomonadati</taxon>
        <taxon>Campylobacterota</taxon>
        <taxon>Epsilonproteobacteria</taxon>
        <taxon>Campylobacterales</taxon>
        <taxon>Campylobacteraceae</taxon>
        <taxon>Campylobacter</taxon>
    </lineage>
</organism>
<dbReference type="EC" id="2.7.7.23" evidence="1"/>
<dbReference type="EC" id="2.3.1.157" evidence="1"/>
<dbReference type="EMBL" id="CP000792">
    <property type="protein sequence ID" value="EAT98082.1"/>
    <property type="molecule type" value="Genomic_DNA"/>
</dbReference>
<dbReference type="RefSeq" id="WP_012001543.1">
    <property type="nucleotide sequence ID" value="NC_009802.2"/>
</dbReference>
<dbReference type="SMR" id="A7ZCS8"/>
<dbReference type="STRING" id="360104.CCC13826_0692"/>
<dbReference type="KEGG" id="cco:CCC13826_0692"/>
<dbReference type="eggNOG" id="COG1207">
    <property type="taxonomic scope" value="Bacteria"/>
</dbReference>
<dbReference type="HOGENOM" id="CLU_029499_15_2_7"/>
<dbReference type="OrthoDB" id="9775031at2"/>
<dbReference type="UniPathway" id="UPA00113">
    <property type="reaction ID" value="UER00532"/>
</dbReference>
<dbReference type="UniPathway" id="UPA00113">
    <property type="reaction ID" value="UER00533"/>
</dbReference>
<dbReference type="UniPathway" id="UPA00973"/>
<dbReference type="Proteomes" id="UP000001121">
    <property type="component" value="Chromosome"/>
</dbReference>
<dbReference type="GO" id="GO:0005737">
    <property type="term" value="C:cytoplasm"/>
    <property type="evidence" value="ECO:0007669"/>
    <property type="project" value="UniProtKB-SubCell"/>
</dbReference>
<dbReference type="GO" id="GO:0016020">
    <property type="term" value="C:membrane"/>
    <property type="evidence" value="ECO:0007669"/>
    <property type="project" value="GOC"/>
</dbReference>
<dbReference type="GO" id="GO:0019134">
    <property type="term" value="F:glucosamine-1-phosphate N-acetyltransferase activity"/>
    <property type="evidence" value="ECO:0007669"/>
    <property type="project" value="UniProtKB-UniRule"/>
</dbReference>
<dbReference type="GO" id="GO:0000287">
    <property type="term" value="F:magnesium ion binding"/>
    <property type="evidence" value="ECO:0007669"/>
    <property type="project" value="UniProtKB-UniRule"/>
</dbReference>
<dbReference type="GO" id="GO:0003977">
    <property type="term" value="F:UDP-N-acetylglucosamine diphosphorylase activity"/>
    <property type="evidence" value="ECO:0007669"/>
    <property type="project" value="UniProtKB-UniRule"/>
</dbReference>
<dbReference type="GO" id="GO:0000902">
    <property type="term" value="P:cell morphogenesis"/>
    <property type="evidence" value="ECO:0007669"/>
    <property type="project" value="UniProtKB-UniRule"/>
</dbReference>
<dbReference type="GO" id="GO:0071555">
    <property type="term" value="P:cell wall organization"/>
    <property type="evidence" value="ECO:0007669"/>
    <property type="project" value="UniProtKB-KW"/>
</dbReference>
<dbReference type="GO" id="GO:0009245">
    <property type="term" value="P:lipid A biosynthetic process"/>
    <property type="evidence" value="ECO:0007669"/>
    <property type="project" value="UniProtKB-UniRule"/>
</dbReference>
<dbReference type="GO" id="GO:0009252">
    <property type="term" value="P:peptidoglycan biosynthetic process"/>
    <property type="evidence" value="ECO:0007669"/>
    <property type="project" value="UniProtKB-UniRule"/>
</dbReference>
<dbReference type="GO" id="GO:0008360">
    <property type="term" value="P:regulation of cell shape"/>
    <property type="evidence" value="ECO:0007669"/>
    <property type="project" value="UniProtKB-KW"/>
</dbReference>
<dbReference type="GO" id="GO:0006048">
    <property type="term" value="P:UDP-N-acetylglucosamine biosynthetic process"/>
    <property type="evidence" value="ECO:0007669"/>
    <property type="project" value="UniProtKB-UniPathway"/>
</dbReference>
<dbReference type="CDD" id="cd02540">
    <property type="entry name" value="GT2_GlmU_N_bac"/>
    <property type="match status" value="1"/>
</dbReference>
<dbReference type="Gene3D" id="2.160.10.10">
    <property type="entry name" value="Hexapeptide repeat proteins"/>
    <property type="match status" value="1"/>
</dbReference>
<dbReference type="Gene3D" id="3.90.550.10">
    <property type="entry name" value="Spore Coat Polysaccharide Biosynthesis Protein SpsA, Chain A"/>
    <property type="match status" value="1"/>
</dbReference>
<dbReference type="HAMAP" id="MF_01631">
    <property type="entry name" value="GlmU"/>
    <property type="match status" value="1"/>
</dbReference>
<dbReference type="InterPro" id="IPR005882">
    <property type="entry name" value="Bifunctional_GlmU"/>
</dbReference>
<dbReference type="InterPro" id="IPR050065">
    <property type="entry name" value="GlmU-like"/>
</dbReference>
<dbReference type="InterPro" id="IPR001451">
    <property type="entry name" value="Hexapep"/>
</dbReference>
<dbReference type="InterPro" id="IPR018357">
    <property type="entry name" value="Hexapep_transf_CS"/>
</dbReference>
<dbReference type="InterPro" id="IPR025877">
    <property type="entry name" value="MobA-like_NTP_Trfase"/>
</dbReference>
<dbReference type="InterPro" id="IPR029044">
    <property type="entry name" value="Nucleotide-diphossugar_trans"/>
</dbReference>
<dbReference type="InterPro" id="IPR011004">
    <property type="entry name" value="Trimer_LpxA-like_sf"/>
</dbReference>
<dbReference type="NCBIfam" id="TIGR01173">
    <property type="entry name" value="glmU"/>
    <property type="match status" value="1"/>
</dbReference>
<dbReference type="NCBIfam" id="NF010939">
    <property type="entry name" value="PRK14359.1"/>
    <property type="match status" value="1"/>
</dbReference>
<dbReference type="PANTHER" id="PTHR43584:SF3">
    <property type="entry name" value="BIFUNCTIONAL PROTEIN GLMU"/>
    <property type="match status" value="1"/>
</dbReference>
<dbReference type="PANTHER" id="PTHR43584">
    <property type="entry name" value="NUCLEOTIDYL TRANSFERASE"/>
    <property type="match status" value="1"/>
</dbReference>
<dbReference type="Pfam" id="PF00132">
    <property type="entry name" value="Hexapep"/>
    <property type="match status" value="1"/>
</dbReference>
<dbReference type="Pfam" id="PF12804">
    <property type="entry name" value="NTP_transf_3"/>
    <property type="match status" value="1"/>
</dbReference>
<dbReference type="SUPFAM" id="SSF53448">
    <property type="entry name" value="Nucleotide-diphospho-sugar transferases"/>
    <property type="match status" value="1"/>
</dbReference>
<dbReference type="SUPFAM" id="SSF51161">
    <property type="entry name" value="Trimeric LpxA-like enzymes"/>
    <property type="match status" value="1"/>
</dbReference>
<dbReference type="PROSITE" id="PS00101">
    <property type="entry name" value="HEXAPEP_TRANSFERASES"/>
    <property type="match status" value="1"/>
</dbReference>
<proteinExistence type="inferred from homology"/>
<evidence type="ECO:0000255" key="1">
    <source>
        <dbReference type="HAMAP-Rule" id="MF_01631"/>
    </source>
</evidence>
<keyword id="KW-0012">Acyltransferase</keyword>
<keyword id="KW-0133">Cell shape</keyword>
<keyword id="KW-0961">Cell wall biogenesis/degradation</keyword>
<keyword id="KW-0963">Cytoplasm</keyword>
<keyword id="KW-0460">Magnesium</keyword>
<keyword id="KW-0479">Metal-binding</keyword>
<keyword id="KW-0511">Multifunctional enzyme</keyword>
<keyword id="KW-0548">Nucleotidyltransferase</keyword>
<keyword id="KW-0573">Peptidoglycan synthesis</keyword>
<keyword id="KW-0677">Repeat</keyword>
<keyword id="KW-0808">Transferase</keyword>